<organism>
    <name type="scientific">Solanum lycopersicum</name>
    <name type="common">Tomato</name>
    <name type="synonym">Lycopersicon esculentum</name>
    <dbReference type="NCBI Taxonomy" id="4081"/>
    <lineage>
        <taxon>Eukaryota</taxon>
        <taxon>Viridiplantae</taxon>
        <taxon>Streptophyta</taxon>
        <taxon>Embryophyta</taxon>
        <taxon>Tracheophyta</taxon>
        <taxon>Spermatophyta</taxon>
        <taxon>Magnoliopsida</taxon>
        <taxon>eudicotyledons</taxon>
        <taxon>Gunneridae</taxon>
        <taxon>Pentapetalae</taxon>
        <taxon>asterids</taxon>
        <taxon>lamiids</taxon>
        <taxon>Solanales</taxon>
        <taxon>Solanaceae</taxon>
        <taxon>Solanoideae</taxon>
        <taxon>Solaneae</taxon>
        <taxon>Solanum</taxon>
        <taxon>Solanum subgen. Lycopersicon</taxon>
    </lineage>
</organism>
<evidence type="ECO:0000250" key="1"/>
<evidence type="ECO:0000255" key="2"/>
<evidence type="ECO:0000255" key="3">
    <source>
        <dbReference type="PROSITE-ProRule" id="PRU10040"/>
    </source>
</evidence>
<evidence type="ECO:0000305" key="4"/>
<feature type="signal peptide" evidence="2">
    <location>
        <begin position="1"/>
        <end status="unknown"/>
    </location>
</feature>
<feature type="chain" id="PRO_0000023492" description="Pectinesterase 3">
    <location>
        <begin status="unknown"/>
        <end position="544"/>
    </location>
</feature>
<feature type="active site" description="Proton donor" evidence="3">
    <location>
        <position position="359"/>
    </location>
</feature>
<feature type="active site" description="Nucleophile" evidence="3">
    <location>
        <position position="380"/>
    </location>
</feature>
<feature type="binding site" evidence="1">
    <location>
        <position position="306"/>
    </location>
    <ligand>
        <name>substrate</name>
    </ligand>
</feature>
<feature type="binding site" evidence="1">
    <location>
        <position position="336"/>
    </location>
    <ligand>
        <name>substrate</name>
    </ligand>
</feature>
<feature type="binding site" evidence="1">
    <location>
        <position position="448"/>
    </location>
    <ligand>
        <name>substrate</name>
    </ligand>
</feature>
<feature type="binding site" evidence="1">
    <location>
        <position position="450"/>
    </location>
    <ligand>
        <name>substrate</name>
    </ligand>
</feature>
<feature type="site" description="Transition state stabilizer" evidence="1">
    <location>
        <position position="358"/>
    </location>
</feature>
<feature type="glycosylation site" description="N-linked (GlcNAc...) asparagine" evidence="2">
    <location>
        <position position="174"/>
    </location>
</feature>
<feature type="glycosylation site" description="N-linked (GlcNAc...) asparagine" evidence="2">
    <location>
        <position position="257"/>
    </location>
</feature>
<feature type="glycosylation site" description="N-linked (GlcNAc...) asparagine" evidence="2">
    <location>
        <position position="291"/>
    </location>
</feature>
<feature type="glycosylation site" description="N-linked (GlcNAc...) asparagine" evidence="2">
    <location>
        <position position="532"/>
    </location>
</feature>
<comment type="function">
    <text evidence="1">Acts in the modification of cell walls via demethylesterification of cell wall pectin.</text>
</comment>
<comment type="catalytic activity">
    <reaction>
        <text>[(1-&gt;4)-alpha-D-galacturonosyl methyl ester](n) + n H2O = [(1-&gt;4)-alpha-D-galacturonosyl](n) + n methanol + n H(+)</text>
        <dbReference type="Rhea" id="RHEA:22380"/>
        <dbReference type="Rhea" id="RHEA-COMP:14570"/>
        <dbReference type="Rhea" id="RHEA-COMP:14573"/>
        <dbReference type="ChEBI" id="CHEBI:15377"/>
        <dbReference type="ChEBI" id="CHEBI:15378"/>
        <dbReference type="ChEBI" id="CHEBI:17790"/>
        <dbReference type="ChEBI" id="CHEBI:140522"/>
        <dbReference type="ChEBI" id="CHEBI:140523"/>
        <dbReference type="EC" id="3.1.1.11"/>
    </reaction>
</comment>
<comment type="pathway">
    <text>Glycan metabolism; pectin degradation; 2-dehydro-3-deoxy-D-gluconate from pectin: step 1/5.</text>
</comment>
<comment type="subcellular location">
    <subcellularLocation>
        <location evidence="4">Secreted</location>
        <location evidence="4">Cell wall</location>
    </subcellularLocation>
</comment>
<comment type="miscellaneous">
    <text>The PMEI region may act as an autoinhibitory domain and prevent untimely PME activity during transport.</text>
</comment>
<comment type="similarity">
    <text evidence="4">In the N-terminal section; belongs to the PMEI family.</text>
</comment>
<comment type="similarity">
    <text evidence="4">In the C-terminal section; belongs to the pectinesterase family.</text>
</comment>
<protein>
    <recommendedName>
        <fullName>Pectinesterase 3</fullName>
        <shortName>PE 3</shortName>
        <ecNumber>3.1.1.11</ecNumber>
    </recommendedName>
    <alternativeName>
        <fullName>Pectin methylesterase 3</fullName>
    </alternativeName>
</protein>
<reference key="1">
    <citation type="submission" date="1996-09" db="EMBL/GenBank/DDBJ databases">
        <authorList>
            <person name="Turner L.A."/>
            <person name="Harriman R.W."/>
            <person name="Handa A.K."/>
        </authorList>
    </citation>
    <scope>NUCLEOTIDE SEQUENCE [GENOMIC DNA]</scope>
    <source>
        <strain>cv. VFNT Cherry</strain>
    </source>
</reference>
<sequence>MATPLQPFLTKTHKQNPIIGFNILTFVVTLFVALFLVVFLVAPYQFEIKHSNLCKTAQDSQLCLSYVSEIVTTESDGVTVLKKFLVKYVHQMNNAIPVVRKIKNQINDIRQQGALTDCLELLDQSVDLVSDSIAAIDKRSRSEHANAQSWLSGVLTNHVTCLDELTSFSLSTKNGTVLDELITRAKVALAMLASVTTPNDEVLRQGLGKMPYWVSSRDRKLMESSGKDIIANRVVAQDGTGDYQTLAEAVAAAPDKNKTRYVIYVKMGIYKENVVVTKKKMNLMIVGDGMNATIITGSLNVVDGSTFPSNTLAAVGQGFILQDICIQNTAGPEKDQAVALRVGADMSVINRCRIDAYQDTLYAHSQRQFYRDSYVTGTVDFIFGNAAVVFQKCQIVARKPNKRQKNMVTAQGRTDPNQATGTSIQFCDIIASPDLEPVMNEYKTYLGRPWKKHSRTVVMQSYLDGHIDPSGWFEWRGDFALKTLYYGEFMNNGPGAGTSKRVKWPGYHVITDPNEAMPFTVAELIQGGSWLNSTSVAYVEGLVE</sequence>
<name>PME3_SOLLC</name>
<accession>Q96576</accession>
<gene>
    <name type="primary">PME3</name>
</gene>
<dbReference type="EC" id="3.1.1.11"/>
<dbReference type="EMBL" id="U70676">
    <property type="protein sequence ID" value="AAB38793.1"/>
    <property type="molecule type" value="Genomic_DNA"/>
</dbReference>
<dbReference type="PIR" id="T07593">
    <property type="entry name" value="T07593"/>
</dbReference>
<dbReference type="SMR" id="Q96576"/>
<dbReference type="STRING" id="4081.Q96576"/>
<dbReference type="GlyCosmos" id="Q96576">
    <property type="glycosylation" value="4 sites, No reported glycans"/>
</dbReference>
<dbReference type="PaxDb" id="4081-Solyc07g064190.1.1"/>
<dbReference type="eggNOG" id="ENOG502QUQ5">
    <property type="taxonomic scope" value="Eukaryota"/>
</dbReference>
<dbReference type="InParanoid" id="Q96576"/>
<dbReference type="UniPathway" id="UPA00545">
    <property type="reaction ID" value="UER00823"/>
</dbReference>
<dbReference type="Proteomes" id="UP000004994">
    <property type="component" value="Unplaced"/>
</dbReference>
<dbReference type="ExpressionAtlas" id="Q96576">
    <property type="expression patterns" value="baseline and differential"/>
</dbReference>
<dbReference type="GO" id="GO:0005576">
    <property type="term" value="C:extracellular region"/>
    <property type="evidence" value="ECO:0007669"/>
    <property type="project" value="UniProtKB-KW"/>
</dbReference>
<dbReference type="GO" id="GO:0030599">
    <property type="term" value="F:pectinesterase activity"/>
    <property type="evidence" value="ECO:0000318"/>
    <property type="project" value="GO_Central"/>
</dbReference>
<dbReference type="GO" id="GO:0046910">
    <property type="term" value="F:pectinesterase inhibitor activity"/>
    <property type="evidence" value="ECO:0000318"/>
    <property type="project" value="GO_Central"/>
</dbReference>
<dbReference type="GO" id="GO:0042545">
    <property type="term" value="P:cell wall modification"/>
    <property type="evidence" value="ECO:0007669"/>
    <property type="project" value="InterPro"/>
</dbReference>
<dbReference type="GO" id="GO:0009835">
    <property type="term" value="P:fruit ripening"/>
    <property type="evidence" value="ECO:0007669"/>
    <property type="project" value="UniProtKB-KW"/>
</dbReference>
<dbReference type="GO" id="GO:0045490">
    <property type="term" value="P:pectin catabolic process"/>
    <property type="evidence" value="ECO:0007669"/>
    <property type="project" value="UniProtKB-UniPathway"/>
</dbReference>
<dbReference type="CDD" id="cd15799">
    <property type="entry name" value="PMEI-like_4"/>
    <property type="match status" value="1"/>
</dbReference>
<dbReference type="FunFam" id="2.160.20.10:FF:000001">
    <property type="entry name" value="Pectinesterase"/>
    <property type="match status" value="1"/>
</dbReference>
<dbReference type="FunFam" id="1.20.140.40:FF:000015">
    <property type="entry name" value="Pectinesterase 3"/>
    <property type="match status" value="1"/>
</dbReference>
<dbReference type="Gene3D" id="1.20.140.40">
    <property type="entry name" value="Invertase/pectin methylesterase inhibitor family protein"/>
    <property type="match status" value="1"/>
</dbReference>
<dbReference type="Gene3D" id="2.160.20.10">
    <property type="entry name" value="Single-stranded right-handed beta-helix, Pectin lyase-like"/>
    <property type="match status" value="1"/>
</dbReference>
<dbReference type="InterPro" id="IPR035513">
    <property type="entry name" value="Invertase/methylesterase_inhib"/>
</dbReference>
<dbReference type="InterPro" id="IPR012334">
    <property type="entry name" value="Pectin_lyas_fold"/>
</dbReference>
<dbReference type="InterPro" id="IPR011050">
    <property type="entry name" value="Pectin_lyase_fold/virulence"/>
</dbReference>
<dbReference type="InterPro" id="IPR033131">
    <property type="entry name" value="Pectinesterase_Asp_AS"/>
</dbReference>
<dbReference type="InterPro" id="IPR000070">
    <property type="entry name" value="Pectinesterase_cat"/>
</dbReference>
<dbReference type="InterPro" id="IPR006501">
    <property type="entry name" value="Pectinesterase_inhib_dom"/>
</dbReference>
<dbReference type="InterPro" id="IPR018040">
    <property type="entry name" value="Pectinesterase_Tyr_AS"/>
</dbReference>
<dbReference type="NCBIfam" id="TIGR01614">
    <property type="entry name" value="PME_inhib"/>
    <property type="match status" value="1"/>
</dbReference>
<dbReference type="PANTHER" id="PTHR31707">
    <property type="entry name" value="PECTINESTERASE"/>
    <property type="match status" value="1"/>
</dbReference>
<dbReference type="Pfam" id="PF01095">
    <property type="entry name" value="Pectinesterase"/>
    <property type="match status" value="1"/>
</dbReference>
<dbReference type="Pfam" id="PF04043">
    <property type="entry name" value="PMEI"/>
    <property type="match status" value="1"/>
</dbReference>
<dbReference type="SMART" id="SM00856">
    <property type="entry name" value="PMEI"/>
    <property type="match status" value="1"/>
</dbReference>
<dbReference type="SUPFAM" id="SSF51126">
    <property type="entry name" value="Pectin lyase-like"/>
    <property type="match status" value="1"/>
</dbReference>
<dbReference type="SUPFAM" id="SSF101148">
    <property type="entry name" value="Plant invertase/pectin methylesterase inhibitor"/>
    <property type="match status" value="1"/>
</dbReference>
<dbReference type="PROSITE" id="PS00800">
    <property type="entry name" value="PECTINESTERASE_1"/>
    <property type="match status" value="1"/>
</dbReference>
<dbReference type="PROSITE" id="PS00503">
    <property type="entry name" value="PECTINESTERASE_2"/>
    <property type="match status" value="1"/>
</dbReference>
<keyword id="KW-0063">Aspartyl esterase</keyword>
<keyword id="KW-0134">Cell wall</keyword>
<keyword id="KW-0961">Cell wall biogenesis/degradation</keyword>
<keyword id="KW-0292">Fruit ripening</keyword>
<keyword id="KW-0325">Glycoprotein</keyword>
<keyword id="KW-0378">Hydrolase</keyword>
<keyword id="KW-1185">Reference proteome</keyword>
<keyword id="KW-0964">Secreted</keyword>
<keyword id="KW-0732">Signal</keyword>
<keyword id="KW-0865">Zymogen</keyword>
<proteinExistence type="inferred from homology"/>